<accession>B2RJF8</accession>
<organism>
    <name type="scientific">Porphyromonas gingivalis (strain ATCC 33277 / DSM 20709 / CIP 103683 / JCM 12257 / NCTC 11834 / 2561)</name>
    <dbReference type="NCBI Taxonomy" id="431947"/>
    <lineage>
        <taxon>Bacteria</taxon>
        <taxon>Pseudomonadati</taxon>
        <taxon>Bacteroidota</taxon>
        <taxon>Bacteroidia</taxon>
        <taxon>Bacteroidales</taxon>
        <taxon>Porphyromonadaceae</taxon>
        <taxon>Porphyromonas</taxon>
    </lineage>
</organism>
<dbReference type="EC" id="4.1.1.65" evidence="1"/>
<dbReference type="EMBL" id="AP009380">
    <property type="protein sequence ID" value="BAG33503.1"/>
    <property type="molecule type" value="Genomic_DNA"/>
</dbReference>
<dbReference type="RefSeq" id="WP_004584192.1">
    <property type="nucleotide sequence ID" value="NZ_CP025930.1"/>
</dbReference>
<dbReference type="GeneID" id="29256196"/>
<dbReference type="KEGG" id="pgn:PGN_0984"/>
<dbReference type="eggNOG" id="COG0688">
    <property type="taxonomic scope" value="Bacteria"/>
</dbReference>
<dbReference type="HOGENOM" id="CLU_072492_1_0_10"/>
<dbReference type="OrthoDB" id="9790893at2"/>
<dbReference type="BioCyc" id="PGIN431947:G1G2V-1110-MONOMER"/>
<dbReference type="UniPathway" id="UPA00558">
    <property type="reaction ID" value="UER00616"/>
</dbReference>
<dbReference type="Proteomes" id="UP000008842">
    <property type="component" value="Chromosome"/>
</dbReference>
<dbReference type="GO" id="GO:0005886">
    <property type="term" value="C:plasma membrane"/>
    <property type="evidence" value="ECO:0007669"/>
    <property type="project" value="UniProtKB-SubCell"/>
</dbReference>
<dbReference type="GO" id="GO:0004609">
    <property type="term" value="F:phosphatidylserine decarboxylase activity"/>
    <property type="evidence" value="ECO:0007669"/>
    <property type="project" value="UniProtKB-UniRule"/>
</dbReference>
<dbReference type="GO" id="GO:0006646">
    <property type="term" value="P:phosphatidylethanolamine biosynthetic process"/>
    <property type="evidence" value="ECO:0007669"/>
    <property type="project" value="UniProtKB-UniRule"/>
</dbReference>
<dbReference type="HAMAP" id="MF_00664">
    <property type="entry name" value="PS_decarb_PSD_A"/>
    <property type="match status" value="1"/>
</dbReference>
<dbReference type="InterPro" id="IPR003817">
    <property type="entry name" value="PS_Dcarbxylase"/>
</dbReference>
<dbReference type="InterPro" id="IPR033175">
    <property type="entry name" value="PSD-A"/>
</dbReference>
<dbReference type="NCBIfam" id="NF003678">
    <property type="entry name" value="PRK05305.1-2"/>
    <property type="match status" value="1"/>
</dbReference>
<dbReference type="PANTHER" id="PTHR35809">
    <property type="entry name" value="ARCHAETIDYLSERINE DECARBOXYLASE PROENZYME-RELATED"/>
    <property type="match status" value="1"/>
</dbReference>
<dbReference type="PANTHER" id="PTHR35809:SF1">
    <property type="entry name" value="ARCHAETIDYLSERINE DECARBOXYLASE PROENZYME-RELATED"/>
    <property type="match status" value="1"/>
</dbReference>
<dbReference type="Pfam" id="PF02666">
    <property type="entry name" value="PS_Dcarbxylase"/>
    <property type="match status" value="1"/>
</dbReference>
<feature type="chain" id="PRO_1000131480" description="Phosphatidylserine decarboxylase beta chain" evidence="1">
    <location>
        <begin position="1"/>
        <end position="188"/>
    </location>
</feature>
<feature type="chain" id="PRO_1000131481" description="Phosphatidylserine decarboxylase alpha chain" evidence="1">
    <location>
        <begin position="189"/>
        <end position="221"/>
    </location>
</feature>
<feature type="active site" description="Schiff-base intermediate with substrate; via pyruvic acid" evidence="1">
    <location>
        <position position="189"/>
    </location>
</feature>
<feature type="site" description="Cleavage (non-hydrolytic); by autocatalysis" evidence="1">
    <location>
        <begin position="188"/>
        <end position="189"/>
    </location>
</feature>
<feature type="modified residue" description="Pyruvic acid (Ser); by autocatalysis" evidence="1">
    <location>
        <position position="189"/>
    </location>
</feature>
<sequence>MKVHKESTGLLVSMATLFTGICLSLFYFLGASIVSYLVMIIAIFLYLLTINFFRCPKRHSPFANDDRAVVAPADGKIVAIEEVSENEILHERCIQVSIFMSIFNVHANWFPCEGKVTHVSHKNGHFIAAYLPKSSTDNERSAIVIKTEKGARILARQIAGALARRIVTYAEVGDICSVDAHMGFIKFGSRVDVYLPLGSQVEVKMDQKTVGNQTLIARLPE</sequence>
<evidence type="ECO:0000255" key="1">
    <source>
        <dbReference type="HAMAP-Rule" id="MF_00664"/>
    </source>
</evidence>
<comment type="function">
    <text evidence="1">Catalyzes the formation of phosphatidylethanolamine (PtdEtn) from phosphatidylserine (PtdSer).</text>
</comment>
<comment type="catalytic activity">
    <reaction evidence="1">
        <text>a 1,2-diacyl-sn-glycero-3-phospho-L-serine + H(+) = a 1,2-diacyl-sn-glycero-3-phosphoethanolamine + CO2</text>
        <dbReference type="Rhea" id="RHEA:20828"/>
        <dbReference type="ChEBI" id="CHEBI:15378"/>
        <dbReference type="ChEBI" id="CHEBI:16526"/>
        <dbReference type="ChEBI" id="CHEBI:57262"/>
        <dbReference type="ChEBI" id="CHEBI:64612"/>
        <dbReference type="EC" id="4.1.1.65"/>
    </reaction>
</comment>
<comment type="cofactor">
    <cofactor evidence="1">
        <name>pyruvate</name>
        <dbReference type="ChEBI" id="CHEBI:15361"/>
    </cofactor>
    <text evidence="1">Binds 1 pyruvoyl group covalently per subunit.</text>
</comment>
<comment type="pathway">
    <text evidence="1">Phospholipid metabolism; phosphatidylethanolamine biosynthesis; phosphatidylethanolamine from CDP-diacylglycerol: step 2/2.</text>
</comment>
<comment type="subunit">
    <text evidence="1">Heterodimer of a large membrane-associated beta subunit and a small pyruvoyl-containing alpha subunit.</text>
</comment>
<comment type="subcellular location">
    <subcellularLocation>
        <location evidence="1">Cell membrane</location>
        <topology evidence="1">Peripheral membrane protein</topology>
    </subcellularLocation>
</comment>
<comment type="PTM">
    <text evidence="1">Is synthesized initially as an inactive proenzyme. Formation of the active enzyme involves a self-maturation process in which the active site pyruvoyl group is generated from an internal serine residue via an autocatalytic post-translational modification. Two non-identical subunits are generated from the proenzyme in this reaction, and the pyruvate is formed at the N-terminus of the alpha chain, which is derived from the carboxyl end of the proenzyme. The post-translation cleavage follows an unusual pathway, termed non-hydrolytic serinolysis, in which the side chain hydroxyl group of the serine supplies its oxygen atom to form the C-terminus of the beta chain, while the remainder of the serine residue undergoes an oxidative deamination to produce ammonia and the pyruvoyl prosthetic group on the alpha chain.</text>
</comment>
<comment type="similarity">
    <text evidence="1">Belongs to the phosphatidylserine decarboxylase family. PSD-A subfamily.</text>
</comment>
<proteinExistence type="inferred from homology"/>
<reference key="1">
    <citation type="journal article" date="2008" name="DNA Res.">
        <title>Determination of the genome sequence of Porphyromonas gingivalis strain ATCC 33277 and genomic comparison with strain W83 revealed extensive genome rearrangements in P. gingivalis.</title>
        <authorList>
            <person name="Naito M."/>
            <person name="Hirakawa H."/>
            <person name="Yamashita A."/>
            <person name="Ohara N."/>
            <person name="Shoji M."/>
            <person name="Yukitake H."/>
            <person name="Nakayama K."/>
            <person name="Toh H."/>
            <person name="Yoshimura F."/>
            <person name="Kuhara S."/>
            <person name="Hattori M."/>
            <person name="Hayashi T."/>
            <person name="Nakayama K."/>
        </authorList>
    </citation>
    <scope>NUCLEOTIDE SEQUENCE [LARGE SCALE GENOMIC DNA]</scope>
    <source>
        <strain>ATCC 33277 / DSM 20709 / CIP 103683 / JCM 12257 / NCTC 11834 / 2561</strain>
    </source>
</reference>
<gene>
    <name evidence="1" type="primary">psd</name>
    <name type="ordered locus">PGN_0984</name>
</gene>
<name>PSD_PORG3</name>
<protein>
    <recommendedName>
        <fullName evidence="1">Phosphatidylserine decarboxylase proenzyme</fullName>
        <ecNumber evidence="1">4.1.1.65</ecNumber>
    </recommendedName>
    <component>
        <recommendedName>
            <fullName evidence="1">Phosphatidylserine decarboxylase alpha chain</fullName>
        </recommendedName>
    </component>
    <component>
        <recommendedName>
            <fullName evidence="1">Phosphatidylserine decarboxylase beta chain</fullName>
        </recommendedName>
    </component>
</protein>
<keyword id="KW-1003">Cell membrane</keyword>
<keyword id="KW-0210">Decarboxylase</keyword>
<keyword id="KW-0444">Lipid biosynthesis</keyword>
<keyword id="KW-0443">Lipid metabolism</keyword>
<keyword id="KW-0456">Lyase</keyword>
<keyword id="KW-0472">Membrane</keyword>
<keyword id="KW-0594">Phospholipid biosynthesis</keyword>
<keyword id="KW-1208">Phospholipid metabolism</keyword>
<keyword id="KW-0670">Pyruvate</keyword>
<keyword id="KW-0865">Zymogen</keyword>